<organism>
    <name type="scientific">Xenopus laevis</name>
    <name type="common">African clawed frog</name>
    <dbReference type="NCBI Taxonomy" id="8355"/>
    <lineage>
        <taxon>Eukaryota</taxon>
        <taxon>Metazoa</taxon>
        <taxon>Chordata</taxon>
        <taxon>Craniata</taxon>
        <taxon>Vertebrata</taxon>
        <taxon>Euteleostomi</taxon>
        <taxon>Amphibia</taxon>
        <taxon>Batrachia</taxon>
        <taxon>Anura</taxon>
        <taxon>Pipoidea</taxon>
        <taxon>Pipidae</taxon>
        <taxon>Xenopodinae</taxon>
        <taxon>Xenopus</taxon>
        <taxon>Xenopus</taxon>
    </lineage>
</organism>
<gene>
    <name type="primary">api5-b</name>
</gene>
<protein>
    <recommendedName>
        <fullName>Apoptosis inhibitor 5-B</fullName>
        <shortName>API-5B</shortName>
    </recommendedName>
</protein>
<accession>Q7ZY79</accession>
<sequence>MPTVEELYRNYGILADAKDDVGQHKSAYQVILDGVKGGPKEKRLAAQFIPKFFKHFPDLSDAALNAQLDLCEDEDVSIRRQAIKELSQFATGENLPRVADILTQLLQSDDSAEFNLVNNALLSIFKMDAKGTLGGLFSQILQGEDVVRERAIKFLATKMKTLPEDILTKEVDDYIFSESKKVLYDVTGEEFVLFMKILSALKNLQTVSGRQQLVDLVSEQAGLHQTLNPADPDSVDRLLQCMRQAVPLFSKNVHSTKFVTYFCEQVLPILSSLTSPAEGIDVQLEVLKLLAEMSSFCGDMDKLESNLNKLFDKLLEFMPLPPEEVENGDSAANEEPKLQFSYVECLLFSFHQLGRKLPDFLIAKVDAEKLKDFKIRLQYFARGLQVYIRQLRLTLQGKSGDALKTEENKIKVVALKITNNINVLIKDLFHNPPSYKSTVTLSWKPVQKTDSGQKRMSDETSSTSPPKKPVVGPKRDSRQIYNPPSGKYSGNVGAFSYEQRGGFQGGRGRGWGGRGNRSRGRIY</sequence>
<proteinExistence type="evidence at transcript level"/>
<comment type="function">
    <text>May be an antiapoptotic factor.</text>
</comment>
<comment type="subunit">
    <text evidence="1">Monomer.</text>
</comment>
<comment type="subcellular location">
    <subcellularLocation>
        <location evidence="1">Nucleus</location>
    </subcellularLocation>
</comment>
<comment type="similarity">
    <text evidence="3">Belongs to the API5 family.</text>
</comment>
<name>API5B_XENLA</name>
<dbReference type="EMBL" id="BC043906">
    <property type="protein sequence ID" value="AAH43906.1"/>
    <property type="molecule type" value="mRNA"/>
</dbReference>
<dbReference type="SMR" id="Q7ZY79"/>
<dbReference type="DNASU" id="379918"/>
<dbReference type="GeneID" id="379918"/>
<dbReference type="KEGG" id="xla:379918"/>
<dbReference type="AGR" id="Xenbase:XB-GENE-963042"/>
<dbReference type="CTD" id="379918"/>
<dbReference type="Xenbase" id="XB-GENE-963042">
    <property type="gene designation" value="api5.S"/>
</dbReference>
<dbReference type="OMA" id="RCIKFLA"/>
<dbReference type="OrthoDB" id="19224at2759"/>
<dbReference type="Proteomes" id="UP000186698">
    <property type="component" value="Chromosome 4S"/>
</dbReference>
<dbReference type="Bgee" id="379918">
    <property type="expression patterns" value="Expressed in gastrula and 19 other cell types or tissues"/>
</dbReference>
<dbReference type="GO" id="GO:0005634">
    <property type="term" value="C:nucleus"/>
    <property type="evidence" value="ECO:0000318"/>
    <property type="project" value="GO_Central"/>
</dbReference>
<dbReference type="GO" id="GO:0017134">
    <property type="term" value="F:fibroblast growth factor binding"/>
    <property type="evidence" value="ECO:0000250"/>
    <property type="project" value="UniProtKB"/>
</dbReference>
<dbReference type="GO" id="GO:0003723">
    <property type="term" value="F:RNA binding"/>
    <property type="evidence" value="ECO:0000318"/>
    <property type="project" value="GO_Central"/>
</dbReference>
<dbReference type="GO" id="GO:0006915">
    <property type="term" value="P:apoptotic process"/>
    <property type="evidence" value="ECO:0007669"/>
    <property type="project" value="UniProtKB-KW"/>
</dbReference>
<dbReference type="GO" id="GO:0043066">
    <property type="term" value="P:negative regulation of apoptotic process"/>
    <property type="evidence" value="ECO:0000250"/>
    <property type="project" value="UniProtKB"/>
</dbReference>
<dbReference type="FunFam" id="1.25.10.10:FF:000092">
    <property type="entry name" value="apoptosis inhibitor 5 isoform X2"/>
    <property type="match status" value="1"/>
</dbReference>
<dbReference type="Gene3D" id="1.25.10.10">
    <property type="entry name" value="Leucine-rich Repeat Variant"/>
    <property type="match status" value="1"/>
</dbReference>
<dbReference type="InterPro" id="IPR008383">
    <property type="entry name" value="API5"/>
</dbReference>
<dbReference type="InterPro" id="IPR011989">
    <property type="entry name" value="ARM-like"/>
</dbReference>
<dbReference type="InterPro" id="IPR016024">
    <property type="entry name" value="ARM-type_fold"/>
</dbReference>
<dbReference type="PANTHER" id="PTHR12758:SF19">
    <property type="entry name" value="APOPTOSIS INHIBITOR 5"/>
    <property type="match status" value="1"/>
</dbReference>
<dbReference type="PANTHER" id="PTHR12758">
    <property type="entry name" value="APOPTOSIS INHIBITOR 5-RELATED"/>
    <property type="match status" value="1"/>
</dbReference>
<dbReference type="Pfam" id="PF05918">
    <property type="entry name" value="API5"/>
    <property type="match status" value="1"/>
</dbReference>
<dbReference type="SUPFAM" id="SSF48371">
    <property type="entry name" value="ARM repeat"/>
    <property type="match status" value="1"/>
</dbReference>
<reference key="1">
    <citation type="submission" date="2003-01" db="EMBL/GenBank/DDBJ databases">
        <authorList>
            <consortium name="NIH - Xenopus Gene Collection (XGC) project"/>
        </authorList>
    </citation>
    <scope>NUCLEOTIDE SEQUENCE [LARGE SCALE MRNA]</scope>
    <source>
        <tissue>Embryo</tissue>
    </source>
</reference>
<keyword id="KW-0053">Apoptosis</keyword>
<keyword id="KW-0539">Nucleus</keyword>
<keyword id="KW-1185">Reference proteome</keyword>
<keyword id="KW-0677">Repeat</keyword>
<feature type="chain" id="PRO_0000378096" description="Apoptosis inhibitor 5-B">
    <location>
        <begin position="1"/>
        <end position="523"/>
    </location>
</feature>
<feature type="region of interest" description="ARM-like and Heat-like helical repeats" evidence="1">
    <location>
        <begin position="1"/>
        <end position="360"/>
    </location>
</feature>
<feature type="region of interest" description="Disordered" evidence="2">
    <location>
        <begin position="446"/>
        <end position="523"/>
    </location>
</feature>
<feature type="short sequence motif" description="Nuclear localization signal" evidence="1">
    <location>
        <begin position="454"/>
        <end position="475"/>
    </location>
</feature>
<feature type="compositionally biased region" description="Gly residues" evidence="2">
    <location>
        <begin position="502"/>
        <end position="515"/>
    </location>
</feature>
<evidence type="ECO:0000250" key="1"/>
<evidence type="ECO:0000256" key="2">
    <source>
        <dbReference type="SAM" id="MobiDB-lite"/>
    </source>
</evidence>
<evidence type="ECO:0000305" key="3"/>